<accession>Q02PH8</accession>
<feature type="chain" id="PRO_1000069566" description="Fatty acid oxidation complex subunit alpha">
    <location>
        <begin position="1"/>
        <end position="715"/>
    </location>
</feature>
<feature type="region of interest" description="Enoyl-CoA hydratase/isomerase" evidence="1">
    <location>
        <begin position="1"/>
        <end position="190"/>
    </location>
</feature>
<feature type="region of interest" description="3-hydroxyacyl-CoA dehydrogenase" evidence="1">
    <location>
        <begin position="312"/>
        <end position="715"/>
    </location>
</feature>
<feature type="active site" description="For 3-hydroxyacyl-CoA dehydrogenase activity" evidence="1">
    <location>
        <position position="451"/>
    </location>
</feature>
<feature type="binding site" evidence="1">
    <location>
        <position position="297"/>
    </location>
    <ligand>
        <name>substrate</name>
    </ligand>
</feature>
<feature type="binding site" evidence="1">
    <location>
        <position position="325"/>
    </location>
    <ligand>
        <name>NAD(+)</name>
        <dbReference type="ChEBI" id="CHEBI:57540"/>
    </ligand>
</feature>
<feature type="binding site" evidence="1">
    <location>
        <position position="344"/>
    </location>
    <ligand>
        <name>NAD(+)</name>
        <dbReference type="ChEBI" id="CHEBI:57540"/>
    </ligand>
</feature>
<feature type="binding site" evidence="1">
    <location>
        <begin position="401"/>
        <end position="403"/>
    </location>
    <ligand>
        <name>NAD(+)</name>
        <dbReference type="ChEBI" id="CHEBI:57540"/>
    </ligand>
</feature>
<feature type="binding site" evidence="1">
    <location>
        <position position="408"/>
    </location>
    <ligand>
        <name>NAD(+)</name>
        <dbReference type="ChEBI" id="CHEBI:57540"/>
    </ligand>
</feature>
<feature type="binding site" evidence="1">
    <location>
        <position position="430"/>
    </location>
    <ligand>
        <name>NAD(+)</name>
        <dbReference type="ChEBI" id="CHEBI:57540"/>
    </ligand>
</feature>
<feature type="binding site" evidence="1">
    <location>
        <position position="454"/>
    </location>
    <ligand>
        <name>NAD(+)</name>
        <dbReference type="ChEBI" id="CHEBI:57540"/>
    </ligand>
</feature>
<feature type="binding site" evidence="1">
    <location>
        <position position="501"/>
    </location>
    <ligand>
        <name>substrate</name>
    </ligand>
</feature>
<feature type="binding site" evidence="1">
    <location>
        <position position="660"/>
    </location>
    <ligand>
        <name>substrate</name>
    </ligand>
</feature>
<feature type="site" description="Important for catalytic activity" evidence="1">
    <location>
        <position position="120"/>
    </location>
</feature>
<feature type="site" description="Important for catalytic activity" evidence="1">
    <location>
        <position position="140"/>
    </location>
</feature>
<dbReference type="EC" id="4.2.1.17" evidence="1"/>
<dbReference type="EC" id="5.1.2.3" evidence="1"/>
<dbReference type="EC" id="5.3.3.8" evidence="1"/>
<dbReference type="EC" id="1.1.1.35" evidence="1"/>
<dbReference type="EMBL" id="CP000438">
    <property type="protein sequence ID" value="ABJ12251.1"/>
    <property type="molecule type" value="Genomic_DNA"/>
</dbReference>
<dbReference type="RefSeq" id="WP_003091204.1">
    <property type="nucleotide sequence ID" value="NZ_CP034244.1"/>
</dbReference>
<dbReference type="SMR" id="Q02PH8"/>
<dbReference type="KEGG" id="pau:PA14_25080"/>
<dbReference type="PseudoCAP" id="PA14_25080"/>
<dbReference type="HOGENOM" id="CLU_009834_16_3_6"/>
<dbReference type="BioCyc" id="PAER208963:G1G74-2093-MONOMER"/>
<dbReference type="UniPathway" id="UPA00659"/>
<dbReference type="Proteomes" id="UP000000653">
    <property type="component" value="Chromosome"/>
</dbReference>
<dbReference type="GO" id="GO:0036125">
    <property type="term" value="C:fatty acid beta-oxidation multienzyme complex"/>
    <property type="evidence" value="ECO:0007669"/>
    <property type="project" value="InterPro"/>
</dbReference>
<dbReference type="GO" id="GO:0008692">
    <property type="term" value="F:3-hydroxybutyryl-CoA epimerase activity"/>
    <property type="evidence" value="ECO:0007669"/>
    <property type="project" value="UniProtKB-UniRule"/>
</dbReference>
<dbReference type="GO" id="GO:0004165">
    <property type="term" value="F:delta(3)-delta(2)-enoyl-CoA isomerase activity"/>
    <property type="evidence" value="ECO:0007669"/>
    <property type="project" value="UniProtKB-UniRule"/>
</dbReference>
<dbReference type="GO" id="GO:0004300">
    <property type="term" value="F:enoyl-CoA hydratase activity"/>
    <property type="evidence" value="ECO:0007669"/>
    <property type="project" value="UniProtKB-UniRule"/>
</dbReference>
<dbReference type="GO" id="GO:0016509">
    <property type="term" value="F:long-chain-3-hydroxyacyl-CoA dehydrogenase activity"/>
    <property type="evidence" value="ECO:0007669"/>
    <property type="project" value="TreeGrafter"/>
</dbReference>
<dbReference type="GO" id="GO:0070403">
    <property type="term" value="F:NAD+ binding"/>
    <property type="evidence" value="ECO:0007669"/>
    <property type="project" value="InterPro"/>
</dbReference>
<dbReference type="GO" id="GO:0006635">
    <property type="term" value="P:fatty acid beta-oxidation"/>
    <property type="evidence" value="ECO:0007669"/>
    <property type="project" value="UniProtKB-UniRule"/>
</dbReference>
<dbReference type="CDD" id="cd06558">
    <property type="entry name" value="crotonase-like"/>
    <property type="match status" value="1"/>
</dbReference>
<dbReference type="FunFam" id="1.10.1040.50:FF:000001">
    <property type="entry name" value="Fatty acid oxidation complex subunit alpha"/>
    <property type="match status" value="1"/>
</dbReference>
<dbReference type="FunFam" id="3.90.226.10:FF:000018">
    <property type="entry name" value="Fatty acid oxidation complex subunit alpha"/>
    <property type="match status" value="1"/>
</dbReference>
<dbReference type="FunFam" id="3.40.50.720:FF:000009">
    <property type="entry name" value="Fatty oxidation complex, alpha subunit"/>
    <property type="match status" value="1"/>
</dbReference>
<dbReference type="Gene3D" id="1.10.1040.50">
    <property type="match status" value="1"/>
</dbReference>
<dbReference type="Gene3D" id="3.90.226.10">
    <property type="entry name" value="2-enoyl-CoA Hydratase, Chain A, domain 1"/>
    <property type="match status" value="1"/>
</dbReference>
<dbReference type="Gene3D" id="3.40.50.720">
    <property type="entry name" value="NAD(P)-binding Rossmann-like Domain"/>
    <property type="match status" value="1"/>
</dbReference>
<dbReference type="HAMAP" id="MF_01621">
    <property type="entry name" value="FadB"/>
    <property type="match status" value="1"/>
</dbReference>
<dbReference type="InterPro" id="IPR006180">
    <property type="entry name" value="3-OHacyl-CoA_DH_CS"/>
</dbReference>
<dbReference type="InterPro" id="IPR006176">
    <property type="entry name" value="3-OHacyl-CoA_DH_NAD-bd"/>
</dbReference>
<dbReference type="InterPro" id="IPR006108">
    <property type="entry name" value="3HC_DH_C"/>
</dbReference>
<dbReference type="InterPro" id="IPR008927">
    <property type="entry name" value="6-PGluconate_DH-like_C_sf"/>
</dbReference>
<dbReference type="InterPro" id="IPR029045">
    <property type="entry name" value="ClpP/crotonase-like_dom_sf"/>
</dbReference>
<dbReference type="InterPro" id="IPR018376">
    <property type="entry name" value="Enoyl-CoA_hyd/isom_CS"/>
</dbReference>
<dbReference type="InterPro" id="IPR001753">
    <property type="entry name" value="Enoyl-CoA_hydra/iso"/>
</dbReference>
<dbReference type="InterPro" id="IPR050136">
    <property type="entry name" value="FA_oxidation_alpha_subunit"/>
</dbReference>
<dbReference type="InterPro" id="IPR012799">
    <property type="entry name" value="FadB"/>
</dbReference>
<dbReference type="InterPro" id="IPR036291">
    <property type="entry name" value="NAD(P)-bd_dom_sf"/>
</dbReference>
<dbReference type="NCBIfam" id="TIGR02437">
    <property type="entry name" value="FadB"/>
    <property type="match status" value="1"/>
</dbReference>
<dbReference type="NCBIfam" id="NF008727">
    <property type="entry name" value="PRK11730.1"/>
    <property type="match status" value="1"/>
</dbReference>
<dbReference type="PANTHER" id="PTHR43612">
    <property type="entry name" value="TRIFUNCTIONAL ENZYME SUBUNIT ALPHA"/>
    <property type="match status" value="1"/>
</dbReference>
<dbReference type="PANTHER" id="PTHR43612:SF3">
    <property type="entry name" value="TRIFUNCTIONAL ENZYME SUBUNIT ALPHA, MITOCHONDRIAL"/>
    <property type="match status" value="1"/>
</dbReference>
<dbReference type="Pfam" id="PF00725">
    <property type="entry name" value="3HCDH"/>
    <property type="match status" value="1"/>
</dbReference>
<dbReference type="Pfam" id="PF02737">
    <property type="entry name" value="3HCDH_N"/>
    <property type="match status" value="1"/>
</dbReference>
<dbReference type="Pfam" id="PF00378">
    <property type="entry name" value="ECH_1"/>
    <property type="match status" value="1"/>
</dbReference>
<dbReference type="SUPFAM" id="SSF48179">
    <property type="entry name" value="6-phosphogluconate dehydrogenase C-terminal domain-like"/>
    <property type="match status" value="2"/>
</dbReference>
<dbReference type="SUPFAM" id="SSF52096">
    <property type="entry name" value="ClpP/crotonase"/>
    <property type="match status" value="1"/>
</dbReference>
<dbReference type="SUPFAM" id="SSF51735">
    <property type="entry name" value="NAD(P)-binding Rossmann-fold domains"/>
    <property type="match status" value="1"/>
</dbReference>
<dbReference type="PROSITE" id="PS00067">
    <property type="entry name" value="3HCDH"/>
    <property type="match status" value="1"/>
</dbReference>
<dbReference type="PROSITE" id="PS00166">
    <property type="entry name" value="ENOYL_COA_HYDRATASE"/>
    <property type="match status" value="1"/>
</dbReference>
<gene>
    <name evidence="1" type="primary">fadB</name>
    <name type="ordered locus">PA14_25080</name>
</gene>
<sequence length="715" mass="76954">MIYQGKAITVKPLEGGIVELNFDLKGESVNKFNRLTLSELRAAVDAIKADASVKGVIVTSGKDVFIVGADITEFVDNFQLPDEELMAGNLEANKIFSDFEDLDVPTVAAINGIALGGGLEMCLAADFRVMSATAKVGLPEVKLGIYPGFGGTVRLPRLIGCDNAVEWIASGKENKAEDALKVGAVDAVVAPEQLQAAALDLAKRAVAGELDHKARRQPKLEKLKLNAIEQMMAFETAKGFVAGQAGPNYPAPVEAIKSIQKAANFGRDKALEVEAAGFVKLAKTSVAQSLIGLFLNDQELKKKAKKYDEVAKDVKLAAVLGAGIMGGGIAYQSALKGTPILMKDIREEGIQMGLNEAAKLLGKRVEKGRLTPAKMAEALNGIRPTMSYGDFGNVDIVVEAVVENPKVKQAVLAEVEGAVKEDAIIASNTSTISISLLAQALKRPENFCGMHFFNPVHMMPLVEVIRGEKTGETAIATTVAYAKKMGKSPIVVNDCPGFLVNRVLFPYFGGFAKLLSFGVDFVRIDKVMEKFGWPMGPAYLSDVVGIDTGHHGRDVMAEGFPDRMAVEGKTAVDVMYEANRLGQKNGKGFYAYETDKRGKPKKVTDPQAYEVLKPIVVEQREVTDEDIVNFMMIPLCLETVRCLEDGIVETAAEADMGLIYGIGFPPFRGGALRYIDSIGVAEFVALADKYAELGALYHPTAKLREMAKNGQKFFG</sequence>
<organism>
    <name type="scientific">Pseudomonas aeruginosa (strain UCBPP-PA14)</name>
    <dbReference type="NCBI Taxonomy" id="208963"/>
    <lineage>
        <taxon>Bacteria</taxon>
        <taxon>Pseudomonadati</taxon>
        <taxon>Pseudomonadota</taxon>
        <taxon>Gammaproteobacteria</taxon>
        <taxon>Pseudomonadales</taxon>
        <taxon>Pseudomonadaceae</taxon>
        <taxon>Pseudomonas</taxon>
    </lineage>
</organism>
<reference key="1">
    <citation type="journal article" date="2006" name="Genome Biol.">
        <title>Genomic analysis reveals that Pseudomonas aeruginosa virulence is combinatorial.</title>
        <authorList>
            <person name="Lee D.G."/>
            <person name="Urbach J.M."/>
            <person name="Wu G."/>
            <person name="Liberati N.T."/>
            <person name="Feinbaum R.L."/>
            <person name="Miyata S."/>
            <person name="Diggins L.T."/>
            <person name="He J."/>
            <person name="Saucier M."/>
            <person name="Deziel E."/>
            <person name="Friedman L."/>
            <person name="Li L."/>
            <person name="Grills G."/>
            <person name="Montgomery K."/>
            <person name="Kucherlapati R."/>
            <person name="Rahme L.G."/>
            <person name="Ausubel F.M."/>
        </authorList>
    </citation>
    <scope>NUCLEOTIDE SEQUENCE [LARGE SCALE GENOMIC DNA]</scope>
    <source>
        <strain>UCBPP-PA14</strain>
    </source>
</reference>
<evidence type="ECO:0000255" key="1">
    <source>
        <dbReference type="HAMAP-Rule" id="MF_01621"/>
    </source>
</evidence>
<name>FADB_PSEAB</name>
<proteinExistence type="inferred from homology"/>
<protein>
    <recommendedName>
        <fullName evidence="1">Fatty acid oxidation complex subunit alpha</fullName>
    </recommendedName>
    <domain>
        <recommendedName>
            <fullName evidence="1">Enoyl-CoA hydratase/Delta(3)-cis-Delta(2)-trans-enoyl-CoA isomerase/3-hydroxybutyryl-CoA epimerase</fullName>
            <ecNumber evidence="1">4.2.1.17</ecNumber>
            <ecNumber evidence="1">5.1.2.3</ecNumber>
            <ecNumber evidence="1">5.3.3.8</ecNumber>
        </recommendedName>
    </domain>
    <domain>
        <recommendedName>
            <fullName evidence="1">3-hydroxyacyl-CoA dehydrogenase</fullName>
            <ecNumber evidence="1">1.1.1.35</ecNumber>
        </recommendedName>
    </domain>
</protein>
<keyword id="KW-0276">Fatty acid metabolism</keyword>
<keyword id="KW-0413">Isomerase</keyword>
<keyword id="KW-0442">Lipid degradation</keyword>
<keyword id="KW-0443">Lipid metabolism</keyword>
<keyword id="KW-0456">Lyase</keyword>
<keyword id="KW-0511">Multifunctional enzyme</keyword>
<keyword id="KW-0520">NAD</keyword>
<keyword id="KW-0560">Oxidoreductase</keyword>
<comment type="function">
    <text evidence="1">Involved in the aerobic and anaerobic degradation of long-chain fatty acids via beta-oxidation cycle. Catalyzes the formation of 3-oxoacyl-CoA from enoyl-CoA via L-3-hydroxyacyl-CoA. It can also use D-3-hydroxyacyl-CoA and cis-3-enoyl-CoA as substrate.</text>
</comment>
<comment type="catalytic activity">
    <reaction evidence="1">
        <text>a (3S)-3-hydroxyacyl-CoA + NAD(+) = a 3-oxoacyl-CoA + NADH + H(+)</text>
        <dbReference type="Rhea" id="RHEA:22432"/>
        <dbReference type="ChEBI" id="CHEBI:15378"/>
        <dbReference type="ChEBI" id="CHEBI:57318"/>
        <dbReference type="ChEBI" id="CHEBI:57540"/>
        <dbReference type="ChEBI" id="CHEBI:57945"/>
        <dbReference type="ChEBI" id="CHEBI:90726"/>
        <dbReference type="EC" id="1.1.1.35"/>
    </reaction>
</comment>
<comment type="catalytic activity">
    <reaction evidence="1">
        <text>a (3S)-3-hydroxyacyl-CoA = a (2E)-enoyl-CoA + H2O</text>
        <dbReference type="Rhea" id="RHEA:16105"/>
        <dbReference type="ChEBI" id="CHEBI:15377"/>
        <dbReference type="ChEBI" id="CHEBI:57318"/>
        <dbReference type="ChEBI" id="CHEBI:58856"/>
        <dbReference type="EC" id="4.2.1.17"/>
    </reaction>
</comment>
<comment type="catalytic activity">
    <reaction evidence="1">
        <text>a 4-saturated-(3S)-3-hydroxyacyl-CoA = a (3E)-enoyl-CoA + H2O</text>
        <dbReference type="Rhea" id="RHEA:20724"/>
        <dbReference type="ChEBI" id="CHEBI:15377"/>
        <dbReference type="ChEBI" id="CHEBI:58521"/>
        <dbReference type="ChEBI" id="CHEBI:137480"/>
        <dbReference type="EC" id="4.2.1.17"/>
    </reaction>
</comment>
<comment type="catalytic activity">
    <reaction evidence="1">
        <text>(3S)-3-hydroxybutanoyl-CoA = (3R)-3-hydroxybutanoyl-CoA</text>
        <dbReference type="Rhea" id="RHEA:21760"/>
        <dbReference type="ChEBI" id="CHEBI:57315"/>
        <dbReference type="ChEBI" id="CHEBI:57316"/>
        <dbReference type="EC" id="5.1.2.3"/>
    </reaction>
</comment>
<comment type="catalytic activity">
    <reaction evidence="1">
        <text>a (3Z)-enoyl-CoA = a 4-saturated (2E)-enoyl-CoA</text>
        <dbReference type="Rhea" id="RHEA:45900"/>
        <dbReference type="ChEBI" id="CHEBI:85097"/>
        <dbReference type="ChEBI" id="CHEBI:85489"/>
        <dbReference type="EC" id="5.3.3.8"/>
    </reaction>
</comment>
<comment type="catalytic activity">
    <reaction evidence="1">
        <text>a (3E)-enoyl-CoA = a 4-saturated (2E)-enoyl-CoA</text>
        <dbReference type="Rhea" id="RHEA:45228"/>
        <dbReference type="ChEBI" id="CHEBI:58521"/>
        <dbReference type="ChEBI" id="CHEBI:85097"/>
        <dbReference type="EC" id="5.3.3.8"/>
    </reaction>
</comment>
<comment type="pathway">
    <text evidence="1">Lipid metabolism; fatty acid beta-oxidation.</text>
</comment>
<comment type="subunit">
    <text evidence="1">Heterotetramer of two alpha chains (FadB) and two beta chains (FadA).</text>
</comment>
<comment type="similarity">
    <text evidence="1">In the N-terminal section; belongs to the enoyl-CoA hydratase/isomerase family.</text>
</comment>
<comment type="similarity">
    <text evidence="1">In the C-terminal section; belongs to the 3-hydroxyacyl-CoA dehydrogenase family.</text>
</comment>